<proteinExistence type="evidence at transcript level"/>
<reference key="1">
    <citation type="journal article" date="2019" name="J. Microbiol. Biotechnol.">
        <title>A gene cluster for the biosynthesis of dibenzodioxocinons in the endophyte Pestalotiopsis microspora, a taxol producer.</title>
        <authorList>
            <person name="Liu Y."/>
            <person name="Chen L."/>
            <person name="Xie Q."/>
            <person name="Yu X."/>
            <person name="Duan A."/>
            <person name="Lin Y."/>
            <person name="Xiang B."/>
            <person name="Hao X."/>
            <person name="Chen W."/>
            <person name="Zhu X."/>
        </authorList>
    </citation>
    <scope>NUCLEOTIDE SEQUENCE [MRNA]</scope>
    <scope>FUNCTION</scope>
    <scope>DISRUPTION PHENOTYPE</scope>
    <scope>PATHWAY</scope>
    <source>
        <strain>NK17</strain>
    </source>
</reference>
<reference key="2">
    <citation type="journal article" date="2022" name="Microbiol. Res.">
        <title>Acquiring novel chemicals by overexpression of a transcription factor DibT in the dibenzodioxocinone biosynthetic cluster in Pestalotiopsis microspora.</title>
        <authorList>
            <person name="Liu Y."/>
            <person name="Fu Y."/>
            <person name="Zhou M."/>
            <person name="Hao X."/>
            <person name="Zhang P."/>
            <person name="Zhu X."/>
        </authorList>
    </citation>
    <scope>INDUCTION</scope>
</reference>
<evidence type="ECO:0000255" key="1"/>
<evidence type="ECO:0000255" key="2">
    <source>
        <dbReference type="PROSITE-ProRule" id="PRU00498"/>
    </source>
</evidence>
<evidence type="ECO:0000269" key="3">
    <source>
    </source>
</evidence>
<evidence type="ECO:0000269" key="4">
    <source>
    </source>
</evidence>
<evidence type="ECO:0000303" key="5">
    <source>
    </source>
</evidence>
<evidence type="ECO:0000305" key="6"/>
<evidence type="ECO:0000305" key="7">
    <source>
    </source>
</evidence>
<sequence>MDIPVELRDYSKRRESEEAVANEGNSDDDGNEYLSGLRLTYLFLALILCMLLAVIDLTITATAVPHITDEFHSLNDIGWYASVFFMTVASSQSSWGKIYRYFDLKNMFLLAMGIFELGNVICGAAPTSNALIVGRAITGIGAAGVIAGCFTVAAFAVRPSKRPAFTGGLAATYGVGSSIGPIIGGVLSDRVSWRWCFYINLPIGGFAAIVLFLFFKSPAHSRNEADHRASWREKMLQMDFPGFFCCIAAVTCLLLALLWGGTTKSWNSSDVIGTLVGFFLFTALFAVVEWKSGERAMVVPRIMKQRVVLFGTIGGFFAGGAQFVLVYYVPIYFQAILGTSAQDSGVRNLPYIIGSTITTIVAGTTISATGYFTPLIVGGGALWTVSAGLIYTWSPTTTTGQWIGYQALAGLAVGLCYQPPILAAQALAAPTDVAATSAILLFFQTMGGAFMVSAAQTAFSNGLIHKLVQYSPGTDVQAVIATGLQELRVRYTGAELEAIIQSYMDGLKISFAIIIALTGASTVAGIFMPWKSFKTIQAEKNVENSD</sequence>
<gene>
    <name evidence="5" type="ORF">GME11371</name>
</gene>
<comment type="function">
    <text evidence="3 7">MFS-type transporter; part of the gene cluster that mediates the biosynthesis of dibenzodioxocinones such as pestalotiollide B, a novel class of inhibitors against cholesterol ester transfer protein (CEPT) (PubMed:31474098). essential for dibenzodioxocinones biosynthesis and may be involved in the secretion of the cluster products (Probable).</text>
</comment>
<comment type="pathway">
    <text evidence="3">Secondary metabolite biosynthesis.</text>
</comment>
<comment type="subcellular location">
    <subcellularLocation>
        <location evidence="6">Cell membrane</location>
        <topology evidence="1">Multi-pass membrane protein</topology>
    </subcellularLocation>
</comment>
<comment type="induction">
    <text evidence="4">The expression of the dibenzodioxocinones biosynthesis cluster is positively regulated by the transcription factor dibT.</text>
</comment>
<comment type="disruption phenotype">
    <text evidence="3">Significantly decreases the production of dibenzodioxocinones by approximately 67%.</text>
</comment>
<comment type="similarity">
    <text evidence="6">Belongs to the major facilitator superfamily.</text>
</comment>
<feature type="chain" id="PRO_0000456748" description="MFS-type transporter GME11371">
    <location>
        <begin position="1"/>
        <end position="546"/>
    </location>
</feature>
<feature type="transmembrane region" description="Helical" evidence="1">
    <location>
        <begin position="39"/>
        <end position="59"/>
    </location>
</feature>
<feature type="transmembrane region" description="Helical" evidence="1">
    <location>
        <begin position="77"/>
        <end position="96"/>
    </location>
</feature>
<feature type="transmembrane region" description="Helical" evidence="1">
    <location>
        <begin position="107"/>
        <end position="127"/>
    </location>
</feature>
<feature type="transmembrane region" description="Helical" evidence="1">
    <location>
        <begin position="137"/>
        <end position="157"/>
    </location>
</feature>
<feature type="transmembrane region" description="Helical" evidence="1">
    <location>
        <begin position="167"/>
        <end position="187"/>
    </location>
</feature>
<feature type="transmembrane region" description="Helical" evidence="1">
    <location>
        <begin position="195"/>
        <end position="215"/>
    </location>
</feature>
<feature type="transmembrane region" description="Helical" evidence="1">
    <location>
        <begin position="240"/>
        <end position="260"/>
    </location>
</feature>
<feature type="transmembrane region" description="Helical" evidence="1">
    <location>
        <begin position="270"/>
        <end position="290"/>
    </location>
</feature>
<feature type="transmembrane region" description="Helical" evidence="1">
    <location>
        <begin position="307"/>
        <end position="327"/>
    </location>
</feature>
<feature type="transmembrane region" description="Helical" evidence="1">
    <location>
        <begin position="349"/>
        <end position="369"/>
    </location>
</feature>
<feature type="transmembrane region" description="Helical" evidence="1">
    <location>
        <begin position="370"/>
        <end position="390"/>
    </location>
</feature>
<feature type="transmembrane region" description="Helical" evidence="1">
    <location>
        <begin position="402"/>
        <end position="422"/>
    </location>
</feature>
<feature type="transmembrane region" description="Helical" evidence="1">
    <location>
        <begin position="433"/>
        <end position="453"/>
    </location>
</feature>
<feature type="transmembrane region" description="Helical" evidence="1">
    <location>
        <begin position="509"/>
        <end position="529"/>
    </location>
</feature>
<feature type="glycosylation site" description="N-linked (GlcNAc...) asparagine" evidence="2">
    <location>
        <position position="267"/>
    </location>
</feature>
<name>GME71_PESMI</name>
<keyword id="KW-1003">Cell membrane</keyword>
<keyword id="KW-0325">Glycoprotein</keyword>
<keyword id="KW-0472">Membrane</keyword>
<keyword id="KW-0812">Transmembrane</keyword>
<keyword id="KW-1133">Transmembrane helix</keyword>
<keyword id="KW-0813">Transport</keyword>
<organism>
    <name type="scientific">Pestalotiopsis microspora</name>
    <dbReference type="NCBI Taxonomy" id="85828"/>
    <lineage>
        <taxon>Eukaryota</taxon>
        <taxon>Fungi</taxon>
        <taxon>Dikarya</taxon>
        <taxon>Ascomycota</taxon>
        <taxon>Pezizomycotina</taxon>
        <taxon>Sordariomycetes</taxon>
        <taxon>Xylariomycetidae</taxon>
        <taxon>Amphisphaeriales</taxon>
        <taxon>Sporocadaceae</taxon>
        <taxon>Pestalotiopsis</taxon>
    </lineage>
</organism>
<accession>A0A5B8YU71</accession>
<protein>
    <recommendedName>
        <fullName evidence="5">MFS-type transporter GME11371</fullName>
    </recommendedName>
    <alternativeName>
        <fullName evidence="5">Dibenzodioxocinones biosynthesis cluster protein GME11371</fullName>
    </alternativeName>
</protein>
<dbReference type="EMBL" id="MK590990">
    <property type="protein sequence ID" value="QED41502.1"/>
    <property type="molecule type" value="mRNA"/>
</dbReference>
<dbReference type="SMR" id="A0A5B8YU71"/>
<dbReference type="GO" id="GO:0005886">
    <property type="term" value="C:plasma membrane"/>
    <property type="evidence" value="ECO:0007669"/>
    <property type="project" value="UniProtKB-SubCell"/>
</dbReference>
<dbReference type="GO" id="GO:0022857">
    <property type="term" value="F:transmembrane transporter activity"/>
    <property type="evidence" value="ECO:0007669"/>
    <property type="project" value="InterPro"/>
</dbReference>
<dbReference type="CDD" id="cd17502">
    <property type="entry name" value="MFS_Azr1_MDR_like"/>
    <property type="match status" value="1"/>
</dbReference>
<dbReference type="FunFam" id="1.20.1250.20:FF:000196">
    <property type="entry name" value="MFS toxin efflux pump (AflT)"/>
    <property type="match status" value="1"/>
</dbReference>
<dbReference type="Gene3D" id="1.20.1250.20">
    <property type="entry name" value="MFS general substrate transporter like domains"/>
    <property type="match status" value="1"/>
</dbReference>
<dbReference type="Gene3D" id="1.20.1720.10">
    <property type="entry name" value="Multidrug resistance protein D"/>
    <property type="match status" value="1"/>
</dbReference>
<dbReference type="InterPro" id="IPR011701">
    <property type="entry name" value="MFS"/>
</dbReference>
<dbReference type="InterPro" id="IPR020846">
    <property type="entry name" value="MFS_dom"/>
</dbReference>
<dbReference type="InterPro" id="IPR036259">
    <property type="entry name" value="MFS_trans_sf"/>
</dbReference>
<dbReference type="PANTHER" id="PTHR23501">
    <property type="entry name" value="MAJOR FACILITATOR SUPERFAMILY"/>
    <property type="match status" value="1"/>
</dbReference>
<dbReference type="PANTHER" id="PTHR23501:SF177">
    <property type="entry name" value="MAJOR FACILITATOR SUPERFAMILY (MFS) PROFILE DOMAIN-CONTAINING PROTEIN-RELATED"/>
    <property type="match status" value="1"/>
</dbReference>
<dbReference type="Pfam" id="PF07690">
    <property type="entry name" value="MFS_1"/>
    <property type="match status" value="1"/>
</dbReference>
<dbReference type="SUPFAM" id="SSF103473">
    <property type="entry name" value="MFS general substrate transporter"/>
    <property type="match status" value="1"/>
</dbReference>
<dbReference type="PROSITE" id="PS50850">
    <property type="entry name" value="MFS"/>
    <property type="match status" value="1"/>
</dbReference>